<sequence length="1216" mass="137616">MGKKQKNKSEDSTKDDTDLGALAAEIEGAGAAKEQEPQKSKGKKKKEKKKQDFDENDILRELEELSLEAQGIRADRDAAAVKPTENNEEESASKQDKKKKGQKGKKTSFDENDSEELEDKDSKSKKTARPNSEAPLSGSEDADDSNKLSKKGKKAQKSTKKRDGSEEDEDNSKRSKERSRVNSSGESGGESDEFLQSRKGQKKNQKNKSVPTVDSGNEDDDSSFKIKTVAQKKAEKKEREKKKRDEEKAKLRKMKEKEELEKGKKEQSKQREPQKRPEEEVLTLRGTPDTGAASEEKGDTAAALEDDNEGDKKKKDKKKKKTEKDEKEKEKKKGPSKSTVKAIQEALAKLKEEEERQKREEEERIKRLEELEAKRKEEERLEQEKRERKKQKEKERKERLKKEGKLLTKSQREARARAEVTLRHLQAQGVEVPSKDSLPKKRPVYEDKKKKKTPQQLESKEVSETLEISAPVEAVDQGGPEKEETPPSVEPEEEEDTEDAGLDDWEAMASDEEREKEGNMIHIEVEENPEEEEEEEEEEEEEESEDEEEEGDSEGSDGDEEDCKLSDEKDSGKAGDTKPSKDASSDSEYDSDDDRTKEERAYDKAKRRIEKRRLEHGKNVNTEKLRAPIICVLGHVDTGKTKILDKLRHTHVQDGEAGGITQQIGATNVPLEAINEQTKMIKNFDRENVRIPGMLIIDTPGHESFSNLRNRGSSLCDIAILVVDIMHGLEPQTIESINILKSKKCPFIVALNKIDRLYDWKKSPDSDVAVTLKKQKKNTKDEFEERAKAIIVEFAQQGLNAALFYENKDPRTFVSLVPTSAHTGDGMGSLIYLLVELTQTMLSKRLAHCEELRAQVMEVKALPGMGTTIDVILINGRLKEGDTIIVPGVEGPIVTQIRGLLLPPPMKELRVKNQYEKHKEVEAAQGVKILGKDLEKTLAGLPLLVAYKDDEIPVLKDELIHELKQTLNAIKLEEKGVYVQASTLGSLEALLEFLKTSEVPYAGINIGPVHKKDVMKASVMLEHDPQYAVILAFDVRIERDAQEMADSLGVRIFSAEIIYHLFDAFTKYRQDYKKQKQEEFKHIAVFPCKMKILPQYIFNSRDPIVIGVTVEAGQVKQGTPMCVPSKNFVDIGIVTSIEINHKQVDVAKKGQEVCVKIEPIPGESPKMFGRHFEATDILVSKISRQSIDALKDWFRDEMQKSDWQLIVELKKVFEII</sequence>
<dbReference type="EC" id="3.6.5.3"/>
<dbReference type="EMBL" id="AC114583">
    <property type="status" value="NOT_ANNOTATED_CDS"/>
    <property type="molecule type" value="Genomic_DNA"/>
</dbReference>
<dbReference type="EMBL" id="AK145146">
    <property type="protein sequence ID" value="BAE26259.1"/>
    <property type="molecule type" value="mRNA"/>
</dbReference>
<dbReference type="EMBL" id="AK145732">
    <property type="protein sequence ID" value="BAE26614.1"/>
    <property type="molecule type" value="mRNA"/>
</dbReference>
<dbReference type="EMBL" id="AK163527">
    <property type="protein sequence ID" value="BAE37384.1"/>
    <property type="molecule type" value="mRNA"/>
</dbReference>
<dbReference type="EMBL" id="BC018347">
    <property type="protein sequence ID" value="AAH18347.1"/>
    <property type="status" value="ALT_SEQ"/>
    <property type="molecule type" value="mRNA"/>
</dbReference>
<dbReference type="EMBL" id="BC037150">
    <property type="protein sequence ID" value="AAH37150.1"/>
    <property type="status" value="ALT_SEQ"/>
    <property type="molecule type" value="mRNA"/>
</dbReference>
<dbReference type="EMBL" id="BC040746">
    <property type="protein sequence ID" value="AAH40746.1"/>
    <property type="status" value="ALT_SEQ"/>
    <property type="molecule type" value="mRNA"/>
</dbReference>
<dbReference type="EMBL" id="BC060288">
    <property type="protein sequence ID" value="AAH60288.1"/>
    <property type="status" value="ALT_SEQ"/>
    <property type="molecule type" value="mRNA"/>
</dbReference>
<dbReference type="CCDS" id="CCDS35544.1"/>
<dbReference type="RefSeq" id="NP_938045.2">
    <property type="nucleotide sequence ID" value="NM_198303.2"/>
</dbReference>
<dbReference type="SMR" id="Q05D44"/>
<dbReference type="BioGRID" id="230580">
    <property type="interactions" value="23"/>
</dbReference>
<dbReference type="FunCoup" id="Q05D44">
    <property type="interactions" value="2681"/>
</dbReference>
<dbReference type="IntAct" id="Q05D44">
    <property type="interactions" value="2"/>
</dbReference>
<dbReference type="MINT" id="Q05D44"/>
<dbReference type="STRING" id="10090.ENSMUSP00000027252"/>
<dbReference type="ChEMBL" id="CHEMBL4879453"/>
<dbReference type="GlyGen" id="Q05D44">
    <property type="glycosylation" value="2 sites, 1 O-linked glycan (2 sites)"/>
</dbReference>
<dbReference type="iPTMnet" id="Q05D44"/>
<dbReference type="PhosphoSitePlus" id="Q05D44"/>
<dbReference type="SwissPalm" id="Q05D44"/>
<dbReference type="jPOST" id="Q05D44"/>
<dbReference type="PaxDb" id="10090-ENSMUSP00000027252"/>
<dbReference type="PeptideAtlas" id="Q05D44"/>
<dbReference type="ProteomicsDB" id="267211"/>
<dbReference type="Pumba" id="Q05D44"/>
<dbReference type="Antibodypedia" id="32818">
    <property type="antibodies" value="179 antibodies from 27 providers"/>
</dbReference>
<dbReference type="DNASU" id="226982"/>
<dbReference type="Ensembl" id="ENSMUST00000027252.8">
    <property type="protein sequence ID" value="ENSMUSP00000027252.8"/>
    <property type="gene ID" value="ENSMUSG00000026083.13"/>
</dbReference>
<dbReference type="GeneID" id="226982"/>
<dbReference type="KEGG" id="mmu:226982"/>
<dbReference type="UCSC" id="uc007aso.1">
    <property type="organism name" value="mouse"/>
</dbReference>
<dbReference type="AGR" id="MGI:2441772"/>
<dbReference type="CTD" id="9669"/>
<dbReference type="MGI" id="MGI:2441772">
    <property type="gene designation" value="Eif5b"/>
</dbReference>
<dbReference type="VEuPathDB" id="HostDB:ENSMUSG00000026083"/>
<dbReference type="eggNOG" id="KOG1144">
    <property type="taxonomic scope" value="Eukaryota"/>
</dbReference>
<dbReference type="GeneTree" id="ENSGT00940000162583"/>
<dbReference type="HOGENOM" id="CLU_002656_0_1_1"/>
<dbReference type="InParanoid" id="Q05D44"/>
<dbReference type="OMA" id="EFAVMLC"/>
<dbReference type="OrthoDB" id="4928at2759"/>
<dbReference type="PhylomeDB" id="Q05D44"/>
<dbReference type="TreeFam" id="TF101535"/>
<dbReference type="Reactome" id="R-MMU-72706">
    <property type="pathway name" value="GTP hydrolysis and joining of the 60S ribosomal subunit"/>
</dbReference>
<dbReference type="BioGRID-ORCS" id="226982">
    <property type="hits" value="20 hits in 79 CRISPR screens"/>
</dbReference>
<dbReference type="ChiTaRS" id="Eif5b">
    <property type="organism name" value="mouse"/>
</dbReference>
<dbReference type="PRO" id="PR:Q05D44"/>
<dbReference type="Proteomes" id="UP000000589">
    <property type="component" value="Chromosome 1"/>
</dbReference>
<dbReference type="RNAct" id="Q05D44">
    <property type="molecule type" value="protein"/>
</dbReference>
<dbReference type="Bgee" id="ENSMUSG00000026083">
    <property type="expression patterns" value="Expressed in embryonic post-anal tail and 257 other cell types or tissues"/>
</dbReference>
<dbReference type="GO" id="GO:0005737">
    <property type="term" value="C:cytoplasm"/>
    <property type="evidence" value="ECO:0007669"/>
    <property type="project" value="UniProtKB-SubCell"/>
</dbReference>
<dbReference type="GO" id="GO:0045202">
    <property type="term" value="C:synapse"/>
    <property type="evidence" value="ECO:0000314"/>
    <property type="project" value="SynGO"/>
</dbReference>
<dbReference type="GO" id="GO:0005525">
    <property type="term" value="F:GTP binding"/>
    <property type="evidence" value="ECO:0007669"/>
    <property type="project" value="UniProtKB-KW"/>
</dbReference>
<dbReference type="GO" id="GO:0003924">
    <property type="term" value="F:GTPase activity"/>
    <property type="evidence" value="ECO:0007669"/>
    <property type="project" value="Ensembl"/>
</dbReference>
<dbReference type="GO" id="GO:0046872">
    <property type="term" value="F:metal ion binding"/>
    <property type="evidence" value="ECO:0007669"/>
    <property type="project" value="UniProtKB-KW"/>
</dbReference>
<dbReference type="GO" id="GO:0003743">
    <property type="term" value="F:translation initiation factor activity"/>
    <property type="evidence" value="ECO:0007669"/>
    <property type="project" value="UniProtKB-KW"/>
</dbReference>
<dbReference type="GO" id="GO:0000049">
    <property type="term" value="F:tRNA binding"/>
    <property type="evidence" value="ECO:0007669"/>
    <property type="project" value="Ensembl"/>
</dbReference>
<dbReference type="GO" id="GO:0006446">
    <property type="term" value="P:regulation of translational initiation"/>
    <property type="evidence" value="ECO:0007669"/>
    <property type="project" value="Ensembl"/>
</dbReference>
<dbReference type="GO" id="GO:0042255">
    <property type="term" value="P:ribosome assembly"/>
    <property type="evidence" value="ECO:0007669"/>
    <property type="project" value="Ensembl"/>
</dbReference>
<dbReference type="CDD" id="cd03703">
    <property type="entry name" value="aeIF5B_II"/>
    <property type="match status" value="1"/>
</dbReference>
<dbReference type="CDD" id="cd16266">
    <property type="entry name" value="IF2_aeIF5B_IV"/>
    <property type="match status" value="1"/>
</dbReference>
<dbReference type="CDD" id="cd01887">
    <property type="entry name" value="IF2_eIF5B"/>
    <property type="match status" value="1"/>
</dbReference>
<dbReference type="FunFam" id="2.40.30.10:FF:000026">
    <property type="entry name" value="Eukaryotic translation initiation factor 5B"/>
    <property type="match status" value="1"/>
</dbReference>
<dbReference type="FunFam" id="3.40.50.10050:FF:000002">
    <property type="entry name" value="Eukaryotic translation initiation factor 5B"/>
    <property type="match status" value="1"/>
</dbReference>
<dbReference type="FunFam" id="3.40.50.300:FF:000112">
    <property type="entry name" value="Eukaryotic translation initiation factor 5B"/>
    <property type="match status" value="1"/>
</dbReference>
<dbReference type="FunFam" id="2.40.30.10:FF:000013">
    <property type="entry name" value="eukaryotic translation initiation factor 5B"/>
    <property type="match status" value="1"/>
</dbReference>
<dbReference type="Gene3D" id="3.40.50.300">
    <property type="entry name" value="P-loop containing nucleotide triphosphate hydrolases"/>
    <property type="match status" value="1"/>
</dbReference>
<dbReference type="Gene3D" id="2.40.30.10">
    <property type="entry name" value="Translation factors"/>
    <property type="match status" value="2"/>
</dbReference>
<dbReference type="Gene3D" id="3.40.50.10050">
    <property type="entry name" value="Translation initiation factor IF- 2, domain 3"/>
    <property type="match status" value="1"/>
</dbReference>
<dbReference type="InterPro" id="IPR029459">
    <property type="entry name" value="EFTU-type"/>
</dbReference>
<dbReference type="InterPro" id="IPR027417">
    <property type="entry name" value="P-loop_NTPase"/>
</dbReference>
<dbReference type="InterPro" id="IPR005225">
    <property type="entry name" value="Small_GTP-bd"/>
</dbReference>
<dbReference type="InterPro" id="IPR000795">
    <property type="entry name" value="T_Tr_GTP-bd_dom"/>
</dbReference>
<dbReference type="InterPro" id="IPR015760">
    <property type="entry name" value="TIF_IF2"/>
</dbReference>
<dbReference type="InterPro" id="IPR023115">
    <property type="entry name" value="TIF_IF2_dom3"/>
</dbReference>
<dbReference type="InterPro" id="IPR036925">
    <property type="entry name" value="TIF_IF2_dom3_sf"/>
</dbReference>
<dbReference type="InterPro" id="IPR009000">
    <property type="entry name" value="Transl_B-barrel_sf"/>
</dbReference>
<dbReference type="NCBIfam" id="NF003078">
    <property type="entry name" value="PRK04004.1"/>
    <property type="match status" value="1"/>
</dbReference>
<dbReference type="NCBIfam" id="TIGR00231">
    <property type="entry name" value="small_GTP"/>
    <property type="match status" value="1"/>
</dbReference>
<dbReference type="PANTHER" id="PTHR43381:SF4">
    <property type="entry name" value="EUKARYOTIC TRANSLATION INITIATION FACTOR 5B"/>
    <property type="match status" value="1"/>
</dbReference>
<dbReference type="PANTHER" id="PTHR43381">
    <property type="entry name" value="TRANSLATION INITIATION FACTOR IF-2-RELATED"/>
    <property type="match status" value="1"/>
</dbReference>
<dbReference type="Pfam" id="PF00009">
    <property type="entry name" value="GTP_EFTU"/>
    <property type="match status" value="1"/>
</dbReference>
<dbReference type="Pfam" id="PF14578">
    <property type="entry name" value="GTP_EFTU_D4"/>
    <property type="match status" value="1"/>
</dbReference>
<dbReference type="Pfam" id="PF11987">
    <property type="entry name" value="IF-2"/>
    <property type="match status" value="1"/>
</dbReference>
<dbReference type="PRINTS" id="PR00315">
    <property type="entry name" value="ELONGATNFCT"/>
</dbReference>
<dbReference type="SUPFAM" id="SSF52156">
    <property type="entry name" value="Initiation factor IF2/eIF5b, domain 3"/>
    <property type="match status" value="1"/>
</dbReference>
<dbReference type="SUPFAM" id="SSF52540">
    <property type="entry name" value="P-loop containing nucleoside triphosphate hydrolases"/>
    <property type="match status" value="1"/>
</dbReference>
<dbReference type="SUPFAM" id="SSF50447">
    <property type="entry name" value="Translation proteins"/>
    <property type="match status" value="1"/>
</dbReference>
<dbReference type="PROSITE" id="PS51722">
    <property type="entry name" value="G_TR_2"/>
    <property type="match status" value="1"/>
</dbReference>
<reference key="1">
    <citation type="journal article" date="2009" name="PLoS Biol.">
        <title>Lineage-specific biology revealed by a finished genome assembly of the mouse.</title>
        <authorList>
            <person name="Church D.M."/>
            <person name="Goodstadt L."/>
            <person name="Hillier L.W."/>
            <person name="Zody M.C."/>
            <person name="Goldstein S."/>
            <person name="She X."/>
            <person name="Bult C.J."/>
            <person name="Agarwala R."/>
            <person name="Cherry J.L."/>
            <person name="DiCuccio M."/>
            <person name="Hlavina W."/>
            <person name="Kapustin Y."/>
            <person name="Meric P."/>
            <person name="Maglott D."/>
            <person name="Birtle Z."/>
            <person name="Marques A.C."/>
            <person name="Graves T."/>
            <person name="Zhou S."/>
            <person name="Teague B."/>
            <person name="Potamousis K."/>
            <person name="Churas C."/>
            <person name="Place M."/>
            <person name="Herschleb J."/>
            <person name="Runnheim R."/>
            <person name="Forrest D."/>
            <person name="Amos-Landgraf J."/>
            <person name="Schwartz D.C."/>
            <person name="Cheng Z."/>
            <person name="Lindblad-Toh K."/>
            <person name="Eichler E.E."/>
            <person name="Ponting C.P."/>
        </authorList>
    </citation>
    <scope>NUCLEOTIDE SEQUENCE [LARGE SCALE GENOMIC DNA]</scope>
    <source>
        <strain>C57BL/6J</strain>
    </source>
</reference>
<reference key="2">
    <citation type="journal article" date="2005" name="Science">
        <title>The transcriptional landscape of the mammalian genome.</title>
        <authorList>
            <person name="Carninci P."/>
            <person name="Kasukawa T."/>
            <person name="Katayama S."/>
            <person name="Gough J."/>
            <person name="Frith M.C."/>
            <person name="Maeda N."/>
            <person name="Oyama R."/>
            <person name="Ravasi T."/>
            <person name="Lenhard B."/>
            <person name="Wells C."/>
            <person name="Kodzius R."/>
            <person name="Shimokawa K."/>
            <person name="Bajic V.B."/>
            <person name="Brenner S.E."/>
            <person name="Batalov S."/>
            <person name="Forrest A.R."/>
            <person name="Zavolan M."/>
            <person name="Davis M.J."/>
            <person name="Wilming L.G."/>
            <person name="Aidinis V."/>
            <person name="Allen J.E."/>
            <person name="Ambesi-Impiombato A."/>
            <person name="Apweiler R."/>
            <person name="Aturaliya R.N."/>
            <person name="Bailey T.L."/>
            <person name="Bansal M."/>
            <person name="Baxter L."/>
            <person name="Beisel K.W."/>
            <person name="Bersano T."/>
            <person name="Bono H."/>
            <person name="Chalk A.M."/>
            <person name="Chiu K.P."/>
            <person name="Choudhary V."/>
            <person name="Christoffels A."/>
            <person name="Clutterbuck D.R."/>
            <person name="Crowe M.L."/>
            <person name="Dalla E."/>
            <person name="Dalrymple B.P."/>
            <person name="de Bono B."/>
            <person name="Della Gatta G."/>
            <person name="di Bernardo D."/>
            <person name="Down T."/>
            <person name="Engstrom P."/>
            <person name="Fagiolini M."/>
            <person name="Faulkner G."/>
            <person name="Fletcher C.F."/>
            <person name="Fukushima T."/>
            <person name="Furuno M."/>
            <person name="Futaki S."/>
            <person name="Gariboldi M."/>
            <person name="Georgii-Hemming P."/>
            <person name="Gingeras T.R."/>
            <person name="Gojobori T."/>
            <person name="Green R.E."/>
            <person name="Gustincich S."/>
            <person name="Harbers M."/>
            <person name="Hayashi Y."/>
            <person name="Hensch T.K."/>
            <person name="Hirokawa N."/>
            <person name="Hill D."/>
            <person name="Huminiecki L."/>
            <person name="Iacono M."/>
            <person name="Ikeo K."/>
            <person name="Iwama A."/>
            <person name="Ishikawa T."/>
            <person name="Jakt M."/>
            <person name="Kanapin A."/>
            <person name="Katoh M."/>
            <person name="Kawasawa Y."/>
            <person name="Kelso J."/>
            <person name="Kitamura H."/>
            <person name="Kitano H."/>
            <person name="Kollias G."/>
            <person name="Krishnan S.P."/>
            <person name="Kruger A."/>
            <person name="Kummerfeld S.K."/>
            <person name="Kurochkin I.V."/>
            <person name="Lareau L.F."/>
            <person name="Lazarevic D."/>
            <person name="Lipovich L."/>
            <person name="Liu J."/>
            <person name="Liuni S."/>
            <person name="McWilliam S."/>
            <person name="Madan Babu M."/>
            <person name="Madera M."/>
            <person name="Marchionni L."/>
            <person name="Matsuda H."/>
            <person name="Matsuzawa S."/>
            <person name="Miki H."/>
            <person name="Mignone F."/>
            <person name="Miyake S."/>
            <person name="Morris K."/>
            <person name="Mottagui-Tabar S."/>
            <person name="Mulder N."/>
            <person name="Nakano N."/>
            <person name="Nakauchi H."/>
            <person name="Ng P."/>
            <person name="Nilsson R."/>
            <person name="Nishiguchi S."/>
            <person name="Nishikawa S."/>
            <person name="Nori F."/>
            <person name="Ohara O."/>
            <person name="Okazaki Y."/>
            <person name="Orlando V."/>
            <person name="Pang K.C."/>
            <person name="Pavan W.J."/>
            <person name="Pavesi G."/>
            <person name="Pesole G."/>
            <person name="Petrovsky N."/>
            <person name="Piazza S."/>
            <person name="Reed J."/>
            <person name="Reid J.F."/>
            <person name="Ring B.Z."/>
            <person name="Ringwald M."/>
            <person name="Rost B."/>
            <person name="Ruan Y."/>
            <person name="Salzberg S.L."/>
            <person name="Sandelin A."/>
            <person name="Schneider C."/>
            <person name="Schoenbach C."/>
            <person name="Sekiguchi K."/>
            <person name="Semple C.A."/>
            <person name="Seno S."/>
            <person name="Sessa L."/>
            <person name="Sheng Y."/>
            <person name="Shibata Y."/>
            <person name="Shimada H."/>
            <person name="Shimada K."/>
            <person name="Silva D."/>
            <person name="Sinclair B."/>
            <person name="Sperling S."/>
            <person name="Stupka E."/>
            <person name="Sugiura K."/>
            <person name="Sultana R."/>
            <person name="Takenaka Y."/>
            <person name="Taki K."/>
            <person name="Tammoja K."/>
            <person name="Tan S.L."/>
            <person name="Tang S."/>
            <person name="Taylor M.S."/>
            <person name="Tegner J."/>
            <person name="Teichmann S.A."/>
            <person name="Ueda H.R."/>
            <person name="van Nimwegen E."/>
            <person name="Verardo R."/>
            <person name="Wei C.L."/>
            <person name="Yagi K."/>
            <person name="Yamanishi H."/>
            <person name="Zabarovsky E."/>
            <person name="Zhu S."/>
            <person name="Zimmer A."/>
            <person name="Hide W."/>
            <person name="Bult C."/>
            <person name="Grimmond S.M."/>
            <person name="Teasdale R.D."/>
            <person name="Liu E.T."/>
            <person name="Brusic V."/>
            <person name="Quackenbush J."/>
            <person name="Wahlestedt C."/>
            <person name="Mattick J.S."/>
            <person name="Hume D.A."/>
            <person name="Kai C."/>
            <person name="Sasaki D."/>
            <person name="Tomaru Y."/>
            <person name="Fukuda S."/>
            <person name="Kanamori-Katayama M."/>
            <person name="Suzuki M."/>
            <person name="Aoki J."/>
            <person name="Arakawa T."/>
            <person name="Iida J."/>
            <person name="Imamura K."/>
            <person name="Itoh M."/>
            <person name="Kato T."/>
            <person name="Kawaji H."/>
            <person name="Kawagashira N."/>
            <person name="Kawashima T."/>
            <person name="Kojima M."/>
            <person name="Kondo S."/>
            <person name="Konno H."/>
            <person name="Nakano K."/>
            <person name="Ninomiya N."/>
            <person name="Nishio T."/>
            <person name="Okada M."/>
            <person name="Plessy C."/>
            <person name="Shibata K."/>
            <person name="Shiraki T."/>
            <person name="Suzuki S."/>
            <person name="Tagami M."/>
            <person name="Waki K."/>
            <person name="Watahiki A."/>
            <person name="Okamura-Oho Y."/>
            <person name="Suzuki H."/>
            <person name="Kawai J."/>
            <person name="Hayashizaki Y."/>
        </authorList>
    </citation>
    <scope>NUCLEOTIDE SEQUENCE [LARGE SCALE MRNA] OF 1-771</scope>
    <source>
        <strain>C57BL/6J</strain>
        <tissue>Corpora quadrigemina</tissue>
        <tissue>Mammary gland</tissue>
    </source>
</reference>
<reference key="3">
    <citation type="journal article" date="2004" name="Genome Res.">
        <title>The status, quality, and expansion of the NIH full-length cDNA project: the Mammalian Gene Collection (MGC).</title>
        <authorList>
            <consortium name="The MGC Project Team"/>
        </authorList>
    </citation>
    <scope>NUCLEOTIDE SEQUENCE [LARGE SCALE MRNA] OF 1-402</scope>
    <source>
        <strain>FVB/N</strain>
        <tissue>Limb</tissue>
        <tissue>Mammary tumor</tissue>
    </source>
</reference>
<reference key="4">
    <citation type="journal article" date="2002" name="EMBO J.">
        <title>Exp5 exports eEF1A via tRNA from nuclei and synergizes with other transport pathways to confine translation to the cytoplasm.</title>
        <authorList>
            <person name="Bohnsack M.T."/>
            <person name="Regener K."/>
            <person name="Schwappach B."/>
            <person name="Saffrich R."/>
            <person name="Paraskeva E."/>
            <person name="Hartmann E."/>
            <person name="Goerlich D."/>
        </authorList>
    </citation>
    <scope>SUBCELLULAR LOCATION</scope>
</reference>
<reference key="5">
    <citation type="journal article" date="2004" name="Mol. Cell. Proteomics">
        <title>Phosphoproteomic analysis of the developing mouse brain.</title>
        <authorList>
            <person name="Ballif B.A."/>
            <person name="Villen J."/>
            <person name="Beausoleil S.A."/>
            <person name="Schwartz D."/>
            <person name="Gygi S.P."/>
        </authorList>
    </citation>
    <scope>PHOSPHORYLATION [LARGE SCALE ANALYSIS] AT SER-215</scope>
    <scope>IDENTIFICATION BY MASS SPECTROMETRY [LARGE SCALE ANALYSIS]</scope>
    <source>
        <tissue>Embryonic brain</tissue>
    </source>
</reference>
<reference key="6">
    <citation type="journal article" date="2007" name="J. Proteome Res.">
        <title>A differential phosphoproteomic analysis of retinoic acid-treated P19 cells.</title>
        <authorList>
            <person name="Smith J.C."/>
            <person name="Duchesne M.A."/>
            <person name="Tozzi P."/>
            <person name="Ethier M."/>
            <person name="Figeys D."/>
        </authorList>
    </citation>
    <scope>PHOSPHORYLATION [LARGE SCALE ANALYSIS] AT SER-187 AND SER-191</scope>
    <scope>IDENTIFICATION BY MASS SPECTROMETRY [LARGE SCALE ANALYSIS]</scope>
    <source>
        <tissue>Teratocarcinoma</tissue>
    </source>
</reference>
<reference key="7">
    <citation type="journal article" date="2007" name="Proc. Natl. Acad. Sci. U.S.A.">
        <title>Large-scale phosphorylation analysis of mouse liver.</title>
        <authorList>
            <person name="Villen J."/>
            <person name="Beausoleil S.A."/>
            <person name="Gerber S.A."/>
            <person name="Gygi S.P."/>
        </authorList>
    </citation>
    <scope>PHOSPHORYLATION [LARGE SCALE ANALYSIS] AT SER-114; SER-137; SER-139; SER-187; SER-191 AND SER-215</scope>
    <scope>IDENTIFICATION BY MASS SPECTROMETRY [LARGE SCALE ANALYSIS]</scope>
    <source>
        <tissue>Liver</tissue>
    </source>
</reference>
<reference key="8">
    <citation type="journal article" date="2008" name="J. Proteome Res.">
        <title>Specific phosphopeptide enrichment with immobilized titanium ion affinity chromatography adsorbent for phosphoproteome analysis.</title>
        <authorList>
            <person name="Zhou H."/>
            <person name="Ye M."/>
            <person name="Dong J."/>
            <person name="Han G."/>
            <person name="Jiang X."/>
            <person name="Wu R."/>
            <person name="Zou H."/>
        </authorList>
    </citation>
    <scope>PHOSPHORYLATION [LARGE SCALE ANALYSIS] AT SER-137 AND SER-139</scope>
    <scope>IDENTIFICATION BY MASS SPECTROMETRY [LARGE SCALE ANALYSIS]</scope>
    <source>
        <tissue>Liver</tissue>
    </source>
</reference>
<reference key="9">
    <citation type="journal article" date="2009" name="Immunity">
        <title>The phagosomal proteome in interferon-gamma-activated macrophages.</title>
        <authorList>
            <person name="Trost M."/>
            <person name="English L."/>
            <person name="Lemieux S."/>
            <person name="Courcelles M."/>
            <person name="Desjardins M."/>
            <person name="Thibault P."/>
        </authorList>
    </citation>
    <scope>PHOSPHORYLATION [LARGE SCALE ANALYSIS] AT SER-165 AND SER-215</scope>
    <scope>IDENTIFICATION BY MASS SPECTROMETRY [LARGE SCALE ANALYSIS]</scope>
</reference>
<reference key="10">
    <citation type="journal article" date="2009" name="Mol. Cell. Proteomics">
        <title>Large scale localization of protein phosphorylation by use of electron capture dissociation mass spectrometry.</title>
        <authorList>
            <person name="Sweet S.M."/>
            <person name="Bailey C.M."/>
            <person name="Cunningham D.L."/>
            <person name="Heath J.K."/>
            <person name="Cooper H.J."/>
        </authorList>
    </citation>
    <scope>PHOSPHORYLATION [LARGE SCALE ANALYSIS] AT SER-114; SER-137; SER-139 AND SER-215</scope>
    <scope>IDENTIFICATION BY MASS SPECTROMETRY [LARGE SCALE ANALYSIS]</scope>
    <source>
        <tissue>Embryonic fibroblast</tissue>
    </source>
</reference>
<reference key="11">
    <citation type="journal article" date="2010" name="Cell">
        <title>A tissue-specific atlas of mouse protein phosphorylation and expression.</title>
        <authorList>
            <person name="Huttlin E.L."/>
            <person name="Jedrychowski M.P."/>
            <person name="Elias J.E."/>
            <person name="Goswami T."/>
            <person name="Rad R."/>
            <person name="Beausoleil S.A."/>
            <person name="Villen J."/>
            <person name="Haas W."/>
            <person name="Sowa M.E."/>
            <person name="Gygi S.P."/>
        </authorList>
    </citation>
    <scope>PHOSPHORYLATION [LARGE SCALE ANALYSIS] AT THR-107; SER-108; SER-114; SER-137; SER-139; SER-145; SER-183; SER-184; SER-187; SER-191; SER-209; SER-215 AND SER-223</scope>
    <scope>IDENTIFICATION BY MASS SPECTROMETRY [LARGE SCALE ANALYSIS]</scope>
    <source>
        <tissue>Brain</tissue>
        <tissue>Brown adipose tissue</tissue>
        <tissue>Heart</tissue>
        <tissue>Kidney</tissue>
        <tissue>Liver</tissue>
        <tissue>Lung</tissue>
        <tissue>Pancreas</tissue>
        <tissue>Spleen</tissue>
        <tissue>Testis</tissue>
    </source>
</reference>
<proteinExistence type="evidence at protein level"/>
<comment type="function">
    <text evidence="3">Plays a role in translation initiation. Ribosome-dependent GTPase that promotes the joining of the 60S ribosomal subunit to the pre-initiation complex to form the 80S initiation complex with the initiator methionine-tRNA in the P-site base paired to the start codon. Together with eIF1A (EIF1AX), actively orients the initiator methionine-tRNA in a conformation that allows 60S ribosomal subunit joining to form the 80S initiation complex. Is released after formation of the 80S initiation complex. Its GTPase activity is not essential for ribosomal subunits joining, but GTP hydrolysis is needed for eIF1A (EIF1AX) ejection quickly followed by EIF5B release to form elongation-competent ribosomes. In contrast to its procaryotic homolog, does not promote recruitment of Met-rRNA to the small ribosomal subunit.</text>
</comment>
<comment type="catalytic activity">
    <reaction evidence="3">
        <text>GTP + H2O = GDP + phosphate + H(+)</text>
        <dbReference type="Rhea" id="RHEA:19669"/>
        <dbReference type="ChEBI" id="CHEBI:15377"/>
        <dbReference type="ChEBI" id="CHEBI:15378"/>
        <dbReference type="ChEBI" id="CHEBI:37565"/>
        <dbReference type="ChEBI" id="CHEBI:43474"/>
        <dbReference type="ChEBI" id="CHEBI:58189"/>
        <dbReference type="EC" id="3.6.5.3"/>
    </reaction>
    <physiologicalReaction direction="left-to-right" evidence="3">
        <dbReference type="Rhea" id="RHEA:19670"/>
    </physiologicalReaction>
</comment>
<comment type="cofactor">
    <cofactor evidence="2">
        <name>a monovalent cation</name>
        <dbReference type="ChEBI" id="CHEBI:60242"/>
    </cofactor>
    <text evidence="2">Binds 1 monovalent cation per monomer in the active site. Structural cofactor that stabilizes the GTP-bound 'on' state. May also act as a transition state stabilizer of the hydrolysis reaction.</text>
</comment>
<comment type="subunit">
    <text evidence="1 3">Interacts through its C-terminal domain (CTD) with the CTD of eIF1A (EIF1AX) or with the CTD of EIF5 (mutually exclusive) through a common binding site. Interacts with eIF1A (EIF1AX) from the location of the start codon by the 43S complex until the formation of the 80S complex (By similarity). Interacts with ANXA5 in a calcium and phospholipid-dependent manner (By similarity).</text>
</comment>
<comment type="subcellular location">
    <subcellularLocation>
        <location evidence="6">Cytoplasm</location>
    </subcellularLocation>
</comment>
<comment type="similarity">
    <text evidence="7">Belongs to the TRAFAC class translation factor GTPase superfamily. Classic translation factor GTPase family. IF-2 subfamily.</text>
</comment>
<comment type="sequence caution" evidence="7">
    <conflict type="miscellaneous discrepancy">
        <sequence resource="EMBL-CDS" id="AAH18347"/>
    </conflict>
    <text>Contaminating sequence. Potential poly-A sequence.</text>
</comment>
<comment type="sequence caution" evidence="7">
    <conflict type="miscellaneous discrepancy">
        <sequence resource="EMBL-CDS" id="AAH37150"/>
    </conflict>
    <text>Contaminating sequence. Potential poly-A sequence.</text>
</comment>
<comment type="sequence caution" evidence="7">
    <conflict type="miscellaneous discrepancy">
        <sequence resource="EMBL-CDS" id="AAH40746"/>
    </conflict>
    <text>Contaminating sequence. Potential poly-A sequence.</text>
</comment>
<comment type="sequence caution" evidence="7">
    <conflict type="miscellaneous discrepancy">
        <sequence resource="EMBL-CDS" id="AAH60288"/>
    </conflict>
    <text>Contaminating sequence. Potential poly-A sequence.</text>
</comment>
<protein>
    <recommendedName>
        <fullName>Eukaryotic translation initiation factor 5B</fullName>
        <shortName>eIF-5B</shortName>
        <ecNumber>3.6.5.3</ecNumber>
    </recommendedName>
    <alternativeName>
        <fullName>Translation initiation factor IF-2</fullName>
    </alternativeName>
</protein>
<accession>Q05D44</accession>
<accession>Q3SYI4</accession>
<accession>Q3TQJ8</accession>
<accession>Q3UL37</accession>
<accession>Q3UM39</accession>
<accession>Q6PAI0</accession>
<accession>Q8CFF4</accession>
<accession>Q8CGD6</accession>
<organism>
    <name type="scientific">Mus musculus</name>
    <name type="common">Mouse</name>
    <dbReference type="NCBI Taxonomy" id="10090"/>
    <lineage>
        <taxon>Eukaryota</taxon>
        <taxon>Metazoa</taxon>
        <taxon>Chordata</taxon>
        <taxon>Craniata</taxon>
        <taxon>Vertebrata</taxon>
        <taxon>Euteleostomi</taxon>
        <taxon>Mammalia</taxon>
        <taxon>Eutheria</taxon>
        <taxon>Euarchontoglires</taxon>
        <taxon>Glires</taxon>
        <taxon>Rodentia</taxon>
        <taxon>Myomorpha</taxon>
        <taxon>Muroidea</taxon>
        <taxon>Muridae</taxon>
        <taxon>Murinae</taxon>
        <taxon>Mus</taxon>
        <taxon>Mus</taxon>
    </lineage>
</organism>
<keyword id="KW-0963">Cytoplasm</keyword>
<keyword id="KW-0342">GTP-binding</keyword>
<keyword id="KW-0378">Hydrolase</keyword>
<keyword id="KW-0396">Initiation factor</keyword>
<keyword id="KW-0479">Metal-binding</keyword>
<keyword id="KW-0547">Nucleotide-binding</keyword>
<keyword id="KW-0597">Phosphoprotein</keyword>
<keyword id="KW-0648">Protein biosynthesis</keyword>
<keyword id="KW-1185">Reference proteome</keyword>
<gene>
    <name type="primary">Eif5b</name>
    <name type="synonym">If2</name>
</gene>
<feature type="chain" id="PRO_0000354071" description="Eukaryotic translation initiation factor 5B">
    <location>
        <begin position="1"/>
        <end position="1216"/>
    </location>
</feature>
<feature type="domain" description="tr-type G" evidence="4">
    <location>
        <begin position="625"/>
        <end position="842"/>
    </location>
</feature>
<feature type="region of interest" description="Disordered" evidence="5">
    <location>
        <begin position="1"/>
        <end position="604"/>
    </location>
</feature>
<feature type="region of interest" description="G1" evidence="4">
    <location>
        <begin position="634"/>
        <end position="641"/>
    </location>
</feature>
<feature type="region of interest" description="G2" evidence="4">
    <location>
        <begin position="659"/>
        <end position="663"/>
    </location>
</feature>
<feature type="region of interest" description="G3" evidence="4">
    <location>
        <begin position="698"/>
        <end position="701"/>
    </location>
</feature>
<feature type="region of interest" description="G4" evidence="4">
    <location>
        <begin position="752"/>
        <end position="755"/>
    </location>
</feature>
<feature type="region of interest" description="G5" evidence="4">
    <location>
        <begin position="820"/>
        <end position="822"/>
    </location>
</feature>
<feature type="compositionally biased region" description="Basic and acidic residues" evidence="5">
    <location>
        <begin position="7"/>
        <end position="17"/>
    </location>
</feature>
<feature type="compositionally biased region" description="Low complexity" evidence="5">
    <location>
        <begin position="19"/>
        <end position="32"/>
    </location>
</feature>
<feature type="compositionally biased region" description="Basic and acidic residues" evidence="5">
    <location>
        <begin position="49"/>
        <end position="63"/>
    </location>
</feature>
<feature type="compositionally biased region" description="Basic residues" evidence="5">
    <location>
        <begin position="96"/>
        <end position="106"/>
    </location>
</feature>
<feature type="compositionally biased region" description="Acidic residues" evidence="5">
    <location>
        <begin position="110"/>
        <end position="119"/>
    </location>
</feature>
<feature type="compositionally biased region" description="Basic residues" evidence="5">
    <location>
        <begin position="148"/>
        <end position="160"/>
    </location>
</feature>
<feature type="compositionally biased region" description="Basic and acidic residues" evidence="5">
    <location>
        <begin position="171"/>
        <end position="180"/>
    </location>
</feature>
<feature type="compositionally biased region" description="Basic and acidic residues" evidence="5">
    <location>
        <begin position="232"/>
        <end position="279"/>
    </location>
</feature>
<feature type="compositionally biased region" description="Basic and acidic residues" evidence="5">
    <location>
        <begin position="322"/>
        <end position="333"/>
    </location>
</feature>
<feature type="compositionally biased region" description="Basic and acidic residues" evidence="5">
    <location>
        <begin position="348"/>
        <end position="422"/>
    </location>
</feature>
<feature type="compositionally biased region" description="Basic and acidic residues" evidence="5">
    <location>
        <begin position="433"/>
        <end position="448"/>
    </location>
</feature>
<feature type="compositionally biased region" description="Acidic residues" evidence="5">
    <location>
        <begin position="490"/>
        <end position="510"/>
    </location>
</feature>
<feature type="compositionally biased region" description="Basic and acidic residues" evidence="5">
    <location>
        <begin position="511"/>
        <end position="525"/>
    </location>
</feature>
<feature type="compositionally biased region" description="Acidic residues" evidence="5">
    <location>
        <begin position="526"/>
        <end position="562"/>
    </location>
</feature>
<feature type="compositionally biased region" description="Basic and acidic residues" evidence="5">
    <location>
        <begin position="563"/>
        <end position="584"/>
    </location>
</feature>
<feature type="compositionally biased region" description="Basic and acidic residues" evidence="5">
    <location>
        <begin position="594"/>
        <end position="604"/>
    </location>
</feature>
<feature type="active site" evidence="3">
    <location>
        <position position="702"/>
    </location>
</feature>
<feature type="binding site" evidence="3">
    <location>
        <begin position="636"/>
        <end position="642"/>
    </location>
    <ligand>
        <name>GTP</name>
        <dbReference type="ChEBI" id="CHEBI:37565"/>
    </ligand>
</feature>
<feature type="binding site" evidence="3">
    <location>
        <begin position="659"/>
        <end position="661"/>
    </location>
    <ligand>
        <name>GTP</name>
        <dbReference type="ChEBI" id="CHEBI:37565"/>
    </ligand>
</feature>
<feature type="binding site" evidence="3">
    <location>
        <begin position="752"/>
        <end position="753"/>
    </location>
    <ligand>
        <name>GTP</name>
        <dbReference type="ChEBI" id="CHEBI:37565"/>
    </ligand>
</feature>
<feature type="binding site" evidence="3">
    <location>
        <begin position="755"/>
        <end position="756"/>
    </location>
    <ligand>
        <name>GTP</name>
        <dbReference type="ChEBI" id="CHEBI:37565"/>
    </ligand>
</feature>
<feature type="binding site" evidence="3">
    <location>
        <begin position="821"/>
        <end position="822"/>
    </location>
    <ligand>
        <name>GTP</name>
        <dbReference type="ChEBI" id="CHEBI:37565"/>
    </ligand>
</feature>
<feature type="modified residue" description="Phosphoserine" evidence="3">
    <location>
        <position position="66"/>
    </location>
</feature>
<feature type="modified residue" description="Phosphothreonine" evidence="14">
    <location>
        <position position="107"/>
    </location>
</feature>
<feature type="modified residue" description="Phosphoserine" evidence="14">
    <location>
        <position position="108"/>
    </location>
</feature>
<feature type="modified residue" description="Phosphoserine" evidence="9 12 14">
    <location>
        <position position="114"/>
    </location>
</feature>
<feature type="modified residue" description="Phosphoserine" evidence="9 11 12 14">
    <location>
        <position position="137"/>
    </location>
</feature>
<feature type="modified residue" description="Phosphoserine" evidence="9 11 12 14">
    <location>
        <position position="139"/>
    </location>
</feature>
<feature type="modified residue" description="Phosphoserine" evidence="14">
    <location>
        <position position="145"/>
    </location>
</feature>
<feature type="modified residue" description="Phosphoserine" evidence="13">
    <location>
        <position position="165"/>
    </location>
</feature>
<feature type="modified residue" description="Phosphoserine" evidence="3">
    <location>
        <position position="172"/>
    </location>
</feature>
<feature type="modified residue" description="Phosphoserine" evidence="14">
    <location>
        <position position="183"/>
    </location>
</feature>
<feature type="modified residue" description="Phosphoserine" evidence="14">
    <location>
        <position position="184"/>
    </location>
</feature>
<feature type="modified residue" description="Phosphoserine" evidence="9 10 14">
    <location>
        <position position="187"/>
    </location>
</feature>
<feature type="modified residue" description="Phosphoserine" evidence="9 10 14">
    <location>
        <position position="191"/>
    </location>
</feature>
<feature type="modified residue" description="Phosphoserine" evidence="14">
    <location>
        <position position="209"/>
    </location>
</feature>
<feature type="modified residue" description="Phosphoserine" evidence="8 9 12 13 14">
    <location>
        <position position="215"/>
    </location>
</feature>
<feature type="modified residue" description="Phosphoserine" evidence="14">
    <location>
        <position position="223"/>
    </location>
</feature>
<feature type="modified residue" description="Phosphothreonine" evidence="3">
    <location>
        <position position="300"/>
    </location>
</feature>
<feature type="modified residue" description="Phosphoserine" evidence="3">
    <location>
        <position position="437"/>
    </location>
</feature>
<feature type="modified residue" description="Phosphothreonine" evidence="3">
    <location>
        <position position="497"/>
    </location>
</feature>
<feature type="modified residue" description="Phosphoserine" evidence="1">
    <location>
        <position position="544"/>
    </location>
</feature>
<feature type="modified residue" description="Phosphoserine" evidence="1">
    <location>
        <position position="553"/>
    </location>
</feature>
<feature type="modified residue" description="Phosphoserine" evidence="3">
    <location>
        <position position="556"/>
    </location>
</feature>
<feature type="modified residue" description="Phosphoserine" evidence="3">
    <location>
        <position position="584"/>
    </location>
</feature>
<feature type="modified residue" description="Phosphoserine" evidence="3">
    <location>
        <position position="585"/>
    </location>
</feature>
<feature type="modified residue" description="Phosphoserine" evidence="3">
    <location>
        <position position="587"/>
    </location>
</feature>
<feature type="modified residue" description="Phosphoserine" evidence="3">
    <location>
        <position position="591"/>
    </location>
</feature>
<feature type="modified residue" description="Phosphoserine" evidence="3">
    <location>
        <position position="1164"/>
    </location>
</feature>
<feature type="sequence conflict" description="In Ref. 2; BAE26259." evidence="7" ref="2">
    <original>D</original>
    <variation>N</variation>
    <location>
        <position position="121"/>
    </location>
</feature>
<feature type="sequence conflict" description="In Ref. 2; BAE26259." evidence="7" ref="2">
    <original>G</original>
    <variation>C</variation>
    <location>
        <position position="188"/>
    </location>
</feature>
<feature type="sequence conflict" description="In Ref. 2; BAE26259." evidence="7" ref="2">
    <original>M</original>
    <variation>L</variation>
    <location>
        <position position="254"/>
    </location>
</feature>
<feature type="sequence conflict" description="In Ref. 2; BAE26259." evidence="7" ref="2">
    <original>A</original>
    <variation>V</variation>
    <location>
        <position position="302"/>
    </location>
</feature>
<name>IF2P_MOUSE</name>
<evidence type="ECO:0000250" key="1">
    <source>
        <dbReference type="UniProtKB" id="B2GUV7"/>
    </source>
</evidence>
<evidence type="ECO:0000250" key="2">
    <source>
        <dbReference type="UniProtKB" id="G0S8G9"/>
    </source>
</evidence>
<evidence type="ECO:0000250" key="3">
    <source>
        <dbReference type="UniProtKB" id="O60841"/>
    </source>
</evidence>
<evidence type="ECO:0000255" key="4">
    <source>
        <dbReference type="PROSITE-ProRule" id="PRU01059"/>
    </source>
</evidence>
<evidence type="ECO:0000256" key="5">
    <source>
        <dbReference type="SAM" id="MobiDB-lite"/>
    </source>
</evidence>
<evidence type="ECO:0000269" key="6">
    <source>
    </source>
</evidence>
<evidence type="ECO:0000305" key="7"/>
<evidence type="ECO:0007744" key="8">
    <source>
    </source>
</evidence>
<evidence type="ECO:0007744" key="9">
    <source>
    </source>
</evidence>
<evidence type="ECO:0007744" key="10">
    <source>
    </source>
</evidence>
<evidence type="ECO:0007744" key="11">
    <source>
    </source>
</evidence>
<evidence type="ECO:0007744" key="12">
    <source>
    </source>
</evidence>
<evidence type="ECO:0007744" key="13">
    <source>
    </source>
</evidence>
<evidence type="ECO:0007744" key="14">
    <source>
    </source>
</evidence>